<name>RL18_SALTI</name>
<organism>
    <name type="scientific">Salmonella typhi</name>
    <dbReference type="NCBI Taxonomy" id="90370"/>
    <lineage>
        <taxon>Bacteria</taxon>
        <taxon>Pseudomonadati</taxon>
        <taxon>Pseudomonadota</taxon>
        <taxon>Gammaproteobacteria</taxon>
        <taxon>Enterobacterales</taxon>
        <taxon>Enterobacteriaceae</taxon>
        <taxon>Salmonella</taxon>
    </lineage>
</organism>
<proteinExistence type="inferred from homology"/>
<sequence length="117" mass="12770">MDKKSARIRRATRARRKLKELGATRLVVHRTPRHIYAQVIAPNGSEVLVAASTVEKAIAEQLKYTGNKDAAAAVGKAVAERALEKGIKDVSFDRSGFQYHGRVQALADAAREAGLQF</sequence>
<evidence type="ECO:0000255" key="1">
    <source>
        <dbReference type="HAMAP-Rule" id="MF_01337"/>
    </source>
</evidence>
<evidence type="ECO:0000305" key="2"/>
<accession>Q8XGP4</accession>
<accession>Q7ALS0</accession>
<feature type="chain" id="PRO_0000131336" description="Large ribosomal subunit protein uL18">
    <location>
        <begin position="1"/>
        <end position="117"/>
    </location>
</feature>
<gene>
    <name evidence="1" type="primary">rplR</name>
    <name type="ordered locus">STY4374</name>
    <name type="ordered locus">t4081</name>
</gene>
<protein>
    <recommendedName>
        <fullName evidence="1">Large ribosomal subunit protein uL18</fullName>
    </recommendedName>
    <alternativeName>
        <fullName evidence="2">50S ribosomal protein L18</fullName>
    </alternativeName>
</protein>
<dbReference type="EMBL" id="AE014613">
    <property type="protein sequence ID" value="AAO71548.1"/>
    <property type="molecule type" value="Genomic_DNA"/>
</dbReference>
<dbReference type="EMBL" id="AL513382">
    <property type="protein sequence ID" value="CAD09162.1"/>
    <property type="molecule type" value="Genomic_DNA"/>
</dbReference>
<dbReference type="RefSeq" id="NP_458476.1">
    <property type="nucleotide sequence ID" value="NC_003198.1"/>
</dbReference>
<dbReference type="RefSeq" id="WP_000358956.1">
    <property type="nucleotide sequence ID" value="NZ_WSUR01000046.1"/>
</dbReference>
<dbReference type="SMR" id="Q8XGP4"/>
<dbReference type="STRING" id="220341.gene:17588202"/>
<dbReference type="GeneID" id="93035747"/>
<dbReference type="KEGG" id="stt:t4081"/>
<dbReference type="KEGG" id="sty:STY4374"/>
<dbReference type="PATRIC" id="fig|220341.7.peg.4470"/>
<dbReference type="eggNOG" id="COG0256">
    <property type="taxonomic scope" value="Bacteria"/>
</dbReference>
<dbReference type="HOGENOM" id="CLU_098841_0_1_6"/>
<dbReference type="OMA" id="NKQIYAQ"/>
<dbReference type="OrthoDB" id="9810939at2"/>
<dbReference type="Proteomes" id="UP000000541">
    <property type="component" value="Chromosome"/>
</dbReference>
<dbReference type="Proteomes" id="UP000002670">
    <property type="component" value="Chromosome"/>
</dbReference>
<dbReference type="GO" id="GO:0022625">
    <property type="term" value="C:cytosolic large ribosomal subunit"/>
    <property type="evidence" value="ECO:0007669"/>
    <property type="project" value="TreeGrafter"/>
</dbReference>
<dbReference type="GO" id="GO:0008097">
    <property type="term" value="F:5S rRNA binding"/>
    <property type="evidence" value="ECO:0007669"/>
    <property type="project" value="TreeGrafter"/>
</dbReference>
<dbReference type="GO" id="GO:0003735">
    <property type="term" value="F:structural constituent of ribosome"/>
    <property type="evidence" value="ECO:0007669"/>
    <property type="project" value="InterPro"/>
</dbReference>
<dbReference type="GO" id="GO:0006412">
    <property type="term" value="P:translation"/>
    <property type="evidence" value="ECO:0007669"/>
    <property type="project" value="UniProtKB-UniRule"/>
</dbReference>
<dbReference type="CDD" id="cd00432">
    <property type="entry name" value="Ribosomal_L18_L5e"/>
    <property type="match status" value="1"/>
</dbReference>
<dbReference type="FunFam" id="3.30.420.100:FF:000001">
    <property type="entry name" value="50S ribosomal protein L18"/>
    <property type="match status" value="1"/>
</dbReference>
<dbReference type="Gene3D" id="3.30.420.100">
    <property type="match status" value="1"/>
</dbReference>
<dbReference type="HAMAP" id="MF_01337_B">
    <property type="entry name" value="Ribosomal_uL18_B"/>
    <property type="match status" value="1"/>
</dbReference>
<dbReference type="InterPro" id="IPR004389">
    <property type="entry name" value="Ribosomal_uL18_bac-type"/>
</dbReference>
<dbReference type="InterPro" id="IPR005484">
    <property type="entry name" value="Ribosomal_uL18_bac/euk"/>
</dbReference>
<dbReference type="NCBIfam" id="TIGR00060">
    <property type="entry name" value="L18_bact"/>
    <property type="match status" value="1"/>
</dbReference>
<dbReference type="PANTHER" id="PTHR12899">
    <property type="entry name" value="39S RIBOSOMAL PROTEIN L18, MITOCHONDRIAL"/>
    <property type="match status" value="1"/>
</dbReference>
<dbReference type="PANTHER" id="PTHR12899:SF3">
    <property type="entry name" value="LARGE RIBOSOMAL SUBUNIT PROTEIN UL18M"/>
    <property type="match status" value="1"/>
</dbReference>
<dbReference type="Pfam" id="PF00861">
    <property type="entry name" value="Ribosomal_L18p"/>
    <property type="match status" value="1"/>
</dbReference>
<dbReference type="SUPFAM" id="SSF53137">
    <property type="entry name" value="Translational machinery components"/>
    <property type="match status" value="1"/>
</dbReference>
<keyword id="KW-0687">Ribonucleoprotein</keyword>
<keyword id="KW-0689">Ribosomal protein</keyword>
<keyword id="KW-0694">RNA-binding</keyword>
<keyword id="KW-0699">rRNA-binding</keyword>
<reference key="1">
    <citation type="journal article" date="2003" name="J. Bacteriol.">
        <title>Comparative genomics of Salmonella enterica serovar Typhi strains Ty2 and CT18.</title>
        <authorList>
            <person name="Deng W."/>
            <person name="Liou S.-R."/>
            <person name="Plunkett G. III"/>
            <person name="Mayhew G.F."/>
            <person name="Rose D.J."/>
            <person name="Burland V."/>
            <person name="Kodoyianni V."/>
            <person name="Schwartz D.C."/>
            <person name="Blattner F.R."/>
        </authorList>
    </citation>
    <scope>NUCLEOTIDE SEQUENCE [LARGE SCALE GENOMIC DNA]</scope>
    <source>
        <strain>ATCC 700931 / Ty2</strain>
    </source>
</reference>
<reference key="2">
    <citation type="journal article" date="2001" name="Nature">
        <title>Complete genome sequence of a multiple drug resistant Salmonella enterica serovar Typhi CT18.</title>
        <authorList>
            <person name="Parkhill J."/>
            <person name="Dougan G."/>
            <person name="James K.D."/>
            <person name="Thomson N.R."/>
            <person name="Pickard D."/>
            <person name="Wain J."/>
            <person name="Churcher C.M."/>
            <person name="Mungall K.L."/>
            <person name="Bentley S.D."/>
            <person name="Holden M.T.G."/>
            <person name="Sebaihia M."/>
            <person name="Baker S."/>
            <person name="Basham D."/>
            <person name="Brooks K."/>
            <person name="Chillingworth T."/>
            <person name="Connerton P."/>
            <person name="Cronin A."/>
            <person name="Davis P."/>
            <person name="Davies R.M."/>
            <person name="Dowd L."/>
            <person name="White N."/>
            <person name="Farrar J."/>
            <person name="Feltwell T."/>
            <person name="Hamlin N."/>
            <person name="Haque A."/>
            <person name="Hien T.T."/>
            <person name="Holroyd S."/>
            <person name="Jagels K."/>
            <person name="Krogh A."/>
            <person name="Larsen T.S."/>
            <person name="Leather S."/>
            <person name="Moule S."/>
            <person name="O'Gaora P."/>
            <person name="Parry C."/>
            <person name="Quail M.A."/>
            <person name="Rutherford K.M."/>
            <person name="Simmonds M."/>
            <person name="Skelton J."/>
            <person name="Stevens K."/>
            <person name="Whitehead S."/>
            <person name="Barrell B.G."/>
        </authorList>
    </citation>
    <scope>NUCLEOTIDE SEQUENCE [LARGE SCALE GENOMIC DNA]</scope>
    <source>
        <strain>CT18</strain>
    </source>
</reference>
<comment type="function">
    <text evidence="1">This is one of the proteins that bind and probably mediate the attachment of the 5S RNA into the large ribosomal subunit, where it forms part of the central protuberance.</text>
</comment>
<comment type="subunit">
    <text evidence="1">Part of the 50S ribosomal subunit; part of the 5S rRNA/L5/L18/L25 subcomplex. Contacts the 5S and 23S rRNAs.</text>
</comment>
<comment type="similarity">
    <text evidence="1">Belongs to the universal ribosomal protein uL18 family.</text>
</comment>